<organism evidence="11">
    <name type="scientific">Arabidopsis thaliana</name>
    <name type="common">Mouse-ear cress</name>
    <dbReference type="NCBI Taxonomy" id="3702"/>
    <lineage>
        <taxon>Eukaryota</taxon>
        <taxon>Viridiplantae</taxon>
        <taxon>Streptophyta</taxon>
        <taxon>Embryophyta</taxon>
        <taxon>Tracheophyta</taxon>
        <taxon>Spermatophyta</taxon>
        <taxon>Magnoliopsida</taxon>
        <taxon>eudicotyledons</taxon>
        <taxon>Gunneridae</taxon>
        <taxon>Pentapetalae</taxon>
        <taxon>rosids</taxon>
        <taxon>malvids</taxon>
        <taxon>Brassicales</taxon>
        <taxon>Brassicaceae</taxon>
        <taxon>Camelineae</taxon>
        <taxon>Arabidopsis</taxon>
    </lineage>
</organism>
<feature type="chain" id="PRO_0000434980" description="Protein MICRORCHIDIA 5">
    <location>
        <begin position="1"/>
        <end position="708"/>
    </location>
</feature>
<feature type="region of interest" description="Disordered" evidence="5">
    <location>
        <begin position="1"/>
        <end position="47"/>
    </location>
</feature>
<feature type="coiled-coil region" evidence="3">
    <location>
        <begin position="590"/>
        <end position="665"/>
    </location>
</feature>
<feature type="short sequence motif" description="Nuclear localization signal" evidence="4">
    <location>
        <begin position="672"/>
        <end position="679"/>
    </location>
</feature>
<feature type="compositionally biased region" description="Polar residues" evidence="5">
    <location>
        <begin position="1"/>
        <end position="11"/>
    </location>
</feature>
<feature type="compositionally biased region" description="Basic and acidic residues" evidence="5">
    <location>
        <begin position="23"/>
        <end position="34"/>
    </location>
</feature>
<feature type="splice variant" id="VSP_057992" description="In isoform 2.">
    <original>E</original>
    <variation>EVLPYLTLVSLFIILKHSQKFLLCFQKILQ</variation>
    <location>
        <position position="406"/>
    </location>
</feature>
<feature type="splice variant" id="VSP_057993" description="In isoform 2.">
    <location>
        <begin position="646"/>
        <end position="686"/>
    </location>
</feature>
<protein>
    <recommendedName>
        <fullName evidence="7">Protein MICRORCHIDIA 5</fullName>
        <shortName evidence="7">AtMORC5</shortName>
        <ecNumber>3.6.-.-</ecNumber>
    </recommendedName>
    <alternativeName>
        <fullName evidence="6">Protein CRT1-homolog 5</fullName>
        <shortName evidence="6">CRT1-h5</shortName>
    </alternativeName>
</protein>
<keyword id="KW-0025">Alternative splicing</keyword>
<keyword id="KW-0067">ATP-binding</keyword>
<keyword id="KW-0156">Chromatin regulator</keyword>
<keyword id="KW-0175">Coiled coil</keyword>
<keyword id="KW-0227">DNA damage</keyword>
<keyword id="KW-0234">DNA repair</keyword>
<keyword id="KW-0238">DNA-binding</keyword>
<keyword id="KW-0255">Endonuclease</keyword>
<keyword id="KW-0378">Hydrolase</keyword>
<keyword id="KW-0418">Kinase</keyword>
<keyword id="KW-0540">Nuclease</keyword>
<keyword id="KW-0547">Nucleotide-binding</keyword>
<keyword id="KW-0539">Nucleus</keyword>
<keyword id="KW-1185">Reference proteome</keyword>
<keyword id="KW-0694">RNA-binding</keyword>
<keyword id="KW-0943">RNA-mediated gene silencing</keyword>
<keyword id="KW-0808">Transferase</keyword>
<reference key="1">
    <citation type="journal article" date="2000" name="Nature">
        <title>Sequence and analysis of chromosome 5 of the plant Arabidopsis thaliana.</title>
        <authorList>
            <person name="Tabata S."/>
            <person name="Kaneko T."/>
            <person name="Nakamura Y."/>
            <person name="Kotani H."/>
            <person name="Kato T."/>
            <person name="Asamizu E."/>
            <person name="Miyajima N."/>
            <person name="Sasamoto S."/>
            <person name="Kimura T."/>
            <person name="Hosouchi T."/>
            <person name="Kawashima K."/>
            <person name="Kohara M."/>
            <person name="Matsumoto M."/>
            <person name="Matsuno A."/>
            <person name="Muraki A."/>
            <person name="Nakayama S."/>
            <person name="Nakazaki N."/>
            <person name="Naruo K."/>
            <person name="Okumura S."/>
            <person name="Shinpo S."/>
            <person name="Takeuchi C."/>
            <person name="Wada T."/>
            <person name="Watanabe A."/>
            <person name="Yamada M."/>
            <person name="Yasuda M."/>
            <person name="Sato S."/>
            <person name="de la Bastide M."/>
            <person name="Huang E."/>
            <person name="Spiegel L."/>
            <person name="Gnoj L."/>
            <person name="O'Shaughnessy A."/>
            <person name="Preston R."/>
            <person name="Habermann K."/>
            <person name="Murray J."/>
            <person name="Johnson D."/>
            <person name="Rohlfing T."/>
            <person name="Nelson J."/>
            <person name="Stoneking T."/>
            <person name="Pepin K."/>
            <person name="Spieth J."/>
            <person name="Sekhon M."/>
            <person name="Armstrong J."/>
            <person name="Becker M."/>
            <person name="Belter E."/>
            <person name="Cordum H."/>
            <person name="Cordes M."/>
            <person name="Courtney L."/>
            <person name="Courtney W."/>
            <person name="Dante M."/>
            <person name="Du H."/>
            <person name="Edwards J."/>
            <person name="Fryman J."/>
            <person name="Haakensen B."/>
            <person name="Lamar E."/>
            <person name="Latreille P."/>
            <person name="Leonard S."/>
            <person name="Meyer R."/>
            <person name="Mulvaney E."/>
            <person name="Ozersky P."/>
            <person name="Riley A."/>
            <person name="Strowmatt C."/>
            <person name="Wagner-McPherson C."/>
            <person name="Wollam A."/>
            <person name="Yoakum M."/>
            <person name="Bell M."/>
            <person name="Dedhia N."/>
            <person name="Parnell L."/>
            <person name="Shah R."/>
            <person name="Rodriguez M."/>
            <person name="Hoon See L."/>
            <person name="Vil D."/>
            <person name="Baker J."/>
            <person name="Kirchoff K."/>
            <person name="Toth K."/>
            <person name="King L."/>
            <person name="Bahret A."/>
            <person name="Miller B."/>
            <person name="Marra M.A."/>
            <person name="Martienssen R."/>
            <person name="McCombie W.R."/>
            <person name="Wilson R.K."/>
            <person name="Murphy G."/>
            <person name="Bancroft I."/>
            <person name="Volckaert G."/>
            <person name="Wambutt R."/>
            <person name="Duesterhoeft A."/>
            <person name="Stiekema W."/>
            <person name="Pohl T."/>
            <person name="Entian K.-D."/>
            <person name="Terryn N."/>
            <person name="Hartley N."/>
            <person name="Bent E."/>
            <person name="Johnson S."/>
            <person name="Langham S.-A."/>
            <person name="McCullagh B."/>
            <person name="Robben J."/>
            <person name="Grymonprez B."/>
            <person name="Zimmermann W."/>
            <person name="Ramsperger U."/>
            <person name="Wedler H."/>
            <person name="Balke K."/>
            <person name="Wedler E."/>
            <person name="Peters S."/>
            <person name="van Staveren M."/>
            <person name="Dirkse W."/>
            <person name="Mooijman P."/>
            <person name="Klein Lankhorst R."/>
            <person name="Weitzenegger T."/>
            <person name="Bothe G."/>
            <person name="Rose M."/>
            <person name="Hauf J."/>
            <person name="Berneiser S."/>
            <person name="Hempel S."/>
            <person name="Feldpausch M."/>
            <person name="Lamberth S."/>
            <person name="Villarroel R."/>
            <person name="Gielen J."/>
            <person name="Ardiles W."/>
            <person name="Bents O."/>
            <person name="Lemcke K."/>
            <person name="Kolesov G."/>
            <person name="Mayer K.F.X."/>
            <person name="Rudd S."/>
            <person name="Schoof H."/>
            <person name="Schueller C."/>
            <person name="Zaccaria P."/>
            <person name="Mewes H.-W."/>
            <person name="Bevan M."/>
            <person name="Fransz P.F."/>
        </authorList>
    </citation>
    <scope>NUCLEOTIDE SEQUENCE [LARGE SCALE GENOMIC DNA]</scope>
    <source>
        <strain>cv. Columbia</strain>
    </source>
</reference>
<reference key="2">
    <citation type="journal article" date="2017" name="Plant J.">
        <title>Araport11: a complete reannotation of the Arabidopsis thaliana reference genome.</title>
        <authorList>
            <person name="Cheng C.Y."/>
            <person name="Krishnakumar V."/>
            <person name="Chan A.P."/>
            <person name="Thibaud-Nissen F."/>
            <person name="Schobel S."/>
            <person name="Town C.D."/>
        </authorList>
    </citation>
    <scope>GENOME REANNOTATION</scope>
    <source>
        <strain>cv. Columbia</strain>
    </source>
</reference>
<reference key="3">
    <citation type="journal article" date="2008" name="Plant Signal. Behav.">
        <title>The involvement of the Arabidopsis CRT1 ATPase family in disease resistance protein-mediated signaling.</title>
        <authorList>
            <person name="Kang H.-G."/>
            <person name="Klessig D.F."/>
        </authorList>
    </citation>
    <scope>GENE FAMILY</scope>
    <scope>NOMENCLATURE</scope>
</reference>
<reference key="4">
    <citation type="journal article" date="2014" name="Proc. Natl. Acad. Sci. U.S.A.">
        <title>Transcriptional gene silencing by Arabidopsis microrchidia homologues involves the formation of heteromers.</title>
        <authorList>
            <person name="Moissiard G."/>
            <person name="Bischof S."/>
            <person name="Husmann D."/>
            <person name="Pastor W.A."/>
            <person name="Hale C.J."/>
            <person name="Yen L."/>
            <person name="Stroud H."/>
            <person name="Papikian A."/>
            <person name="Vashisht A.A."/>
            <person name="Wohlschlegel J.A."/>
            <person name="Jacobsen S.E."/>
        </authorList>
    </citation>
    <scope>GENE FAMILY</scope>
    <scope>NOMENCLATURE</scope>
</reference>
<sequence length="708" mass="80919">MAESGSTNPKSPSVVPDSTLGGLKRDLRNYHDGDDSNNLSIKKSKTTKMENNCREIVPLDVTPLSIVPPDTPKLSRQFWKAGDDDEAAPVPLYCSNDAAVRVHPQFLHANATSHKWALGALAELLDNSLDEVSNGATYVHVDSTINKRDGKSSILIVEDNGGGMNPSTFRECLSLGYSRKRNMANRVGQYGNGFKTSTMRLGADAIVFSRSRGINGNNPTQSIGMLSYTFLYETRKCEAIVPTVDYELVDNKWKEIVYNSTNEWLDNLETILRWSPYLSQQDLLDQFNHLEEQGTRIVIYNLWEDDEGKMELDFDTDPHDIQLRGVNRDEKNIDMAKTYPNSRHFLTYRHSLRSYASILYLKRPDNFRIILRGEDVEHHSVLDDMMKIEEKTYKPMRSPEWPDQEEMVASLKLGFVKDAHHHIDIQGFNVYHKNRLIKPFWRVWNAAGSDGRGVIGILEANFIQPAHNKQGFERTVVLAKLESRLVTHQKNYWSSRCHEIGYAPRRKQKNYESSVTETPRPFNNINVVKGSSSSTPVPVRVFRPNVEPSGRNQIPQVETRERSFDINPEIGAKNRSYYGLGISSFKETGSVNLEAELQKVKQESAKLVSELQRQKQLLELQLQESKAKIQNLEKAQREKEVLELQLKESKARIQNLENRQEGVSTIFQQERARRDVTEDGLRKKLREASDVIDGLRKQVDTFKGKRIL</sequence>
<proteinExistence type="inferred from homology"/>
<comment type="function">
    <text evidence="2">Exhibits ATPase activity. Binds DNA/RNA in a non-specific manner and exhibits endonuclease activity. Probably involved in DNA repair. Involved in RNA-directed DNA methylation (RdDM) as a component of the RdDM machinery and required for gene silencing. May also be involved in the regulation of chromatin architecture to maintain gene silencing.</text>
</comment>
<comment type="cofactor">
    <cofactor evidence="2">
        <name>Mg(2+)</name>
        <dbReference type="ChEBI" id="CHEBI:18420"/>
    </cofactor>
    <cofactor evidence="2">
        <name>Mn(2+)</name>
        <dbReference type="ChEBI" id="CHEBI:29035"/>
    </cofactor>
</comment>
<comment type="subunit">
    <text evidence="2">Homodimer and heterodimer. Component of an RNA-directed DNA methylation (RdDM) complex.</text>
</comment>
<comment type="subcellular location">
    <subcellularLocation>
        <location evidence="1 4">Nucleus</location>
    </subcellularLocation>
</comment>
<comment type="alternative products">
    <event type="alternative splicing"/>
    <isoform>
        <id>F4K2G3-1</id>
        <name>1</name>
        <sequence type="displayed"/>
    </isoform>
    <isoform>
        <id>F4K2G3-2</id>
        <name>2</name>
        <sequence type="described" ref="VSP_057992 VSP_057993"/>
    </isoform>
</comment>
<comment type="similarity">
    <text evidence="8">Belongs to the MORC ATPase protein family.</text>
</comment>
<comment type="sequence caution" evidence="8">
    <conflict type="erroneous gene model prediction">
        <sequence resource="EMBL-CDS" id="CAC05441"/>
    </conflict>
</comment>
<gene>
    <name evidence="7" type="primary">MORC5</name>
    <name evidence="6" type="synonym">CRH5</name>
    <name evidence="9" type="ordered locus">At5g13130</name>
    <name evidence="10" type="ORF">T19L5.90</name>
</gene>
<accession>F4K2G3</accession>
<accession>F4K2G2</accession>
<accession>Q9FY97</accession>
<dbReference type="EC" id="3.6.-.-"/>
<dbReference type="EMBL" id="AL391711">
    <property type="protein sequence ID" value="CAC05441.1"/>
    <property type="status" value="ALT_SEQ"/>
    <property type="molecule type" value="Genomic_DNA"/>
</dbReference>
<dbReference type="EMBL" id="CP002688">
    <property type="protein sequence ID" value="AED91854.1"/>
    <property type="molecule type" value="Genomic_DNA"/>
</dbReference>
<dbReference type="EMBL" id="CP002688">
    <property type="protein sequence ID" value="AED91855.1"/>
    <property type="molecule type" value="Genomic_DNA"/>
</dbReference>
<dbReference type="RefSeq" id="NP_001190300.1">
    <molecule id="F4K2G3-2"/>
    <property type="nucleotide sequence ID" value="NM_001203371.1"/>
</dbReference>
<dbReference type="RefSeq" id="NP_196817.2">
    <molecule id="F4K2G3-1"/>
    <property type="nucleotide sequence ID" value="NM_121316.2"/>
</dbReference>
<dbReference type="SMR" id="F4K2G3"/>
<dbReference type="FunCoup" id="F4K2G3">
    <property type="interactions" value="1469"/>
</dbReference>
<dbReference type="STRING" id="3702.F4K2G3"/>
<dbReference type="PaxDb" id="3702-AT5G13130.1"/>
<dbReference type="ProteomicsDB" id="238263">
    <molecule id="F4K2G3-1"/>
</dbReference>
<dbReference type="EnsemblPlants" id="AT5G13130.1">
    <molecule id="F4K2G3-1"/>
    <property type="protein sequence ID" value="AT5G13130.1"/>
    <property type="gene ID" value="AT5G13130"/>
</dbReference>
<dbReference type="EnsemblPlants" id="AT5G13130.2">
    <molecule id="F4K2G3-2"/>
    <property type="protein sequence ID" value="AT5G13130.2"/>
    <property type="gene ID" value="AT5G13130"/>
</dbReference>
<dbReference type="GeneID" id="831152"/>
<dbReference type="Gramene" id="AT5G13130.1">
    <molecule id="F4K2G3-1"/>
    <property type="protein sequence ID" value="AT5G13130.1"/>
    <property type="gene ID" value="AT5G13130"/>
</dbReference>
<dbReference type="Gramene" id="AT5G13130.2">
    <molecule id="F4K2G3-2"/>
    <property type="protein sequence ID" value="AT5G13130.2"/>
    <property type="gene ID" value="AT5G13130"/>
</dbReference>
<dbReference type="KEGG" id="ath:AT5G13130"/>
<dbReference type="Araport" id="AT5G13130"/>
<dbReference type="TAIR" id="AT5G13130">
    <property type="gene designation" value="MORC5"/>
</dbReference>
<dbReference type="eggNOG" id="KOG1845">
    <property type="taxonomic scope" value="Eukaryota"/>
</dbReference>
<dbReference type="InParanoid" id="F4K2G3"/>
<dbReference type="OMA" id="MANTVGQ"/>
<dbReference type="PRO" id="PR:F4K2G3"/>
<dbReference type="Proteomes" id="UP000006548">
    <property type="component" value="Chromosome 5"/>
</dbReference>
<dbReference type="ExpressionAtlas" id="F4K2G3">
    <property type="expression patterns" value="baseline and differential"/>
</dbReference>
<dbReference type="GO" id="GO:0005634">
    <property type="term" value="C:nucleus"/>
    <property type="evidence" value="ECO:0000250"/>
    <property type="project" value="UniProtKB"/>
</dbReference>
<dbReference type="GO" id="GO:0005524">
    <property type="term" value="F:ATP binding"/>
    <property type="evidence" value="ECO:0007669"/>
    <property type="project" value="UniProtKB-KW"/>
</dbReference>
<dbReference type="GO" id="GO:0016887">
    <property type="term" value="F:ATP hydrolysis activity"/>
    <property type="evidence" value="ECO:0000250"/>
    <property type="project" value="UniProtKB"/>
</dbReference>
<dbReference type="GO" id="GO:0003677">
    <property type="term" value="F:DNA binding"/>
    <property type="evidence" value="ECO:0000250"/>
    <property type="project" value="UniProtKB"/>
</dbReference>
<dbReference type="GO" id="GO:0004519">
    <property type="term" value="F:endonuclease activity"/>
    <property type="evidence" value="ECO:0000250"/>
    <property type="project" value="UniProtKB"/>
</dbReference>
<dbReference type="GO" id="GO:0016301">
    <property type="term" value="F:kinase activity"/>
    <property type="evidence" value="ECO:0007669"/>
    <property type="project" value="UniProtKB-KW"/>
</dbReference>
<dbReference type="GO" id="GO:0003723">
    <property type="term" value="F:RNA binding"/>
    <property type="evidence" value="ECO:0000250"/>
    <property type="project" value="UniProtKB"/>
</dbReference>
<dbReference type="GO" id="GO:0006325">
    <property type="term" value="P:chromatin organization"/>
    <property type="evidence" value="ECO:0007669"/>
    <property type="project" value="UniProtKB-KW"/>
</dbReference>
<dbReference type="GO" id="GO:0006281">
    <property type="term" value="P:DNA repair"/>
    <property type="evidence" value="ECO:0007669"/>
    <property type="project" value="UniProtKB-KW"/>
</dbReference>
<dbReference type="GO" id="GO:0031349">
    <property type="term" value="P:positive regulation of defense response"/>
    <property type="evidence" value="ECO:0007669"/>
    <property type="project" value="UniProtKB-ARBA"/>
</dbReference>
<dbReference type="GO" id="GO:0006282">
    <property type="term" value="P:regulation of DNA repair"/>
    <property type="evidence" value="ECO:0000250"/>
    <property type="project" value="UniProtKB"/>
</dbReference>
<dbReference type="GO" id="GO:0060966">
    <property type="term" value="P:regulation of gene silencing by regulatory ncRNA"/>
    <property type="evidence" value="ECO:0000250"/>
    <property type="project" value="UniProtKB"/>
</dbReference>
<dbReference type="GO" id="GO:0031047">
    <property type="term" value="P:regulatory ncRNA-mediated gene silencing"/>
    <property type="evidence" value="ECO:0007669"/>
    <property type="project" value="UniProtKB-KW"/>
</dbReference>
<dbReference type="FunFam" id="3.30.565.10:FF:000075">
    <property type="entry name" value="MORC family CW-type zinc finger protein 4"/>
    <property type="match status" value="1"/>
</dbReference>
<dbReference type="Gene3D" id="3.30.565.10">
    <property type="entry name" value="Histidine kinase-like ATPase, C-terminal domain"/>
    <property type="match status" value="1"/>
</dbReference>
<dbReference type="InterPro" id="IPR036890">
    <property type="entry name" value="HATPase_C_sf"/>
</dbReference>
<dbReference type="InterPro" id="IPR045261">
    <property type="entry name" value="MORC_ATPase"/>
</dbReference>
<dbReference type="InterPro" id="IPR041006">
    <property type="entry name" value="Morc_S5"/>
</dbReference>
<dbReference type="PANTHER" id="PTHR23336:SF72">
    <property type="entry name" value="PROTEIN MICRORCHIDIA 5"/>
    <property type="match status" value="1"/>
</dbReference>
<dbReference type="PANTHER" id="PTHR23336">
    <property type="entry name" value="ZINC FINGER CW-TYPE COILED-COIL DOMAIN PROTEIN 3"/>
    <property type="match status" value="1"/>
</dbReference>
<dbReference type="Pfam" id="PF13589">
    <property type="entry name" value="HATPase_c_3"/>
    <property type="match status" value="1"/>
</dbReference>
<dbReference type="Pfam" id="PF17942">
    <property type="entry name" value="Morc6_S5"/>
    <property type="match status" value="1"/>
</dbReference>
<dbReference type="SUPFAM" id="SSF55874">
    <property type="entry name" value="ATPase domain of HSP90 chaperone/DNA topoisomerase II/histidine kinase"/>
    <property type="match status" value="1"/>
</dbReference>
<name>MORC5_ARATH</name>
<evidence type="ECO:0000250" key="1">
    <source>
        <dbReference type="UniProtKB" id="Q56Y74"/>
    </source>
</evidence>
<evidence type="ECO:0000250" key="2">
    <source>
        <dbReference type="UniProtKB" id="Q84WV6"/>
    </source>
</evidence>
<evidence type="ECO:0000255" key="3"/>
<evidence type="ECO:0000255" key="4">
    <source>
        <dbReference type="PROSITE-ProRule" id="PRU00768"/>
    </source>
</evidence>
<evidence type="ECO:0000256" key="5">
    <source>
        <dbReference type="SAM" id="MobiDB-lite"/>
    </source>
</evidence>
<evidence type="ECO:0000303" key="6">
    <source>
    </source>
</evidence>
<evidence type="ECO:0000303" key="7">
    <source>
    </source>
</evidence>
<evidence type="ECO:0000305" key="8"/>
<evidence type="ECO:0000312" key="9">
    <source>
        <dbReference type="Araport" id="AT5G13130"/>
    </source>
</evidence>
<evidence type="ECO:0000312" key="10">
    <source>
        <dbReference type="EMBL" id="CAC05441.1"/>
    </source>
</evidence>
<evidence type="ECO:0000312" key="11">
    <source>
        <dbReference type="Proteomes" id="UP000006548"/>
    </source>
</evidence>